<sequence length="504" mass="56514">MTKEKKKTGIEPKVFFPPLIIVGILCWLTVRDLDAANVVINAVFSYVTNVWGWAFEWYMVVMLFGWFWLVFGPYAKKRLGNEPPEFSTASWIFMMFASCTSAAVLFWGSIEIYYYISTPPFALEPNSTGAKELGLAYSLFHWGPLPWATYSFLSVAFAYFFFVRKMDVIRPSSTLVPLVGEKHAKGLFGTIVDNFYLVALIFAMGTSLGLATPLVTECMQWLFGIPHTLQLDAIIITCWIILNAICVACGLQKGVKIASDVRSYLSFLMLGWVFIVSGASFIMNYFTDSVGMLLMYLPRMLFYTDAVGKGGFPQGWTVFYWAWWVIYAIQMSIFLARISRGRTVRELCFGMVMGLTASTWILWTVLGSNTLLLMDKNIINIPNLIEQYGVARAIIETWAALPLSTATMWGFFILCFIATVTLINACSYTLAMSTCREVRDGEEPPLLVRIGWSILVGIIGIVLLALGGLKPIQTAIIAGGCPLFFVNIMVTLSFIKDAKQNWKD</sequence>
<gene>
    <name evidence="1" type="primary">caiT</name>
    <name type="ordered locus">EFER_0048</name>
</gene>
<organism>
    <name type="scientific">Escherichia fergusonii (strain ATCC 35469 / DSM 13698 / CCUG 18766 / IAM 14443 / JCM 21226 / LMG 7866 / NBRC 102419 / NCTC 12128 / CDC 0568-73)</name>
    <dbReference type="NCBI Taxonomy" id="585054"/>
    <lineage>
        <taxon>Bacteria</taxon>
        <taxon>Pseudomonadati</taxon>
        <taxon>Pseudomonadota</taxon>
        <taxon>Gammaproteobacteria</taxon>
        <taxon>Enterobacterales</taxon>
        <taxon>Enterobacteriaceae</taxon>
        <taxon>Escherichia</taxon>
    </lineage>
</organism>
<feature type="chain" id="PRO_1000136236" description="L-carnitine/gamma-butyrobetaine antiporter">
    <location>
        <begin position="1"/>
        <end position="504"/>
    </location>
</feature>
<feature type="transmembrane region" description="Helical" evidence="1">
    <location>
        <begin position="10"/>
        <end position="30"/>
    </location>
</feature>
<feature type="transmembrane region" description="Helical" evidence="1">
    <location>
        <begin position="51"/>
        <end position="71"/>
    </location>
</feature>
<feature type="transmembrane region" description="Helical" evidence="1">
    <location>
        <begin position="92"/>
        <end position="112"/>
    </location>
</feature>
<feature type="transmembrane region" description="Helical" evidence="1">
    <location>
        <begin position="143"/>
        <end position="163"/>
    </location>
</feature>
<feature type="transmembrane region" description="Helical" evidence="1">
    <location>
        <begin position="195"/>
        <end position="215"/>
    </location>
</feature>
<feature type="transmembrane region" description="Helical" evidence="1">
    <location>
        <begin position="231"/>
        <end position="251"/>
    </location>
</feature>
<feature type="transmembrane region" description="Helical" evidence="1">
    <location>
        <begin position="263"/>
        <end position="283"/>
    </location>
</feature>
<feature type="transmembrane region" description="Helical" evidence="1">
    <location>
        <begin position="316"/>
        <end position="336"/>
    </location>
</feature>
<feature type="transmembrane region" description="Helical" evidence="1">
    <location>
        <begin position="347"/>
        <end position="367"/>
    </location>
</feature>
<feature type="transmembrane region" description="Helical" evidence="1">
    <location>
        <begin position="403"/>
        <end position="423"/>
    </location>
</feature>
<feature type="transmembrane region" description="Helical" evidence="1">
    <location>
        <begin position="446"/>
        <end position="466"/>
    </location>
</feature>
<feature type="transmembrane region" description="Helical" evidence="1">
    <location>
        <begin position="475"/>
        <end position="495"/>
    </location>
</feature>
<reference key="1">
    <citation type="journal article" date="2009" name="PLoS Genet.">
        <title>Organised genome dynamics in the Escherichia coli species results in highly diverse adaptive paths.</title>
        <authorList>
            <person name="Touchon M."/>
            <person name="Hoede C."/>
            <person name="Tenaillon O."/>
            <person name="Barbe V."/>
            <person name="Baeriswyl S."/>
            <person name="Bidet P."/>
            <person name="Bingen E."/>
            <person name="Bonacorsi S."/>
            <person name="Bouchier C."/>
            <person name="Bouvet O."/>
            <person name="Calteau A."/>
            <person name="Chiapello H."/>
            <person name="Clermont O."/>
            <person name="Cruveiller S."/>
            <person name="Danchin A."/>
            <person name="Diard M."/>
            <person name="Dossat C."/>
            <person name="Karoui M.E."/>
            <person name="Frapy E."/>
            <person name="Garry L."/>
            <person name="Ghigo J.M."/>
            <person name="Gilles A.M."/>
            <person name="Johnson J."/>
            <person name="Le Bouguenec C."/>
            <person name="Lescat M."/>
            <person name="Mangenot S."/>
            <person name="Martinez-Jehanne V."/>
            <person name="Matic I."/>
            <person name="Nassif X."/>
            <person name="Oztas S."/>
            <person name="Petit M.A."/>
            <person name="Pichon C."/>
            <person name="Rouy Z."/>
            <person name="Ruf C.S."/>
            <person name="Schneider D."/>
            <person name="Tourret J."/>
            <person name="Vacherie B."/>
            <person name="Vallenet D."/>
            <person name="Medigue C."/>
            <person name="Rocha E.P.C."/>
            <person name="Denamur E."/>
        </authorList>
    </citation>
    <scope>NUCLEOTIDE SEQUENCE [LARGE SCALE GENOMIC DNA]</scope>
    <source>
        <strain>ATCC 35469 / DSM 13698 / BCRC 15582 / CCUG 18766 / IAM 14443 / JCM 21226 / LMG 7866 / NBRC 102419 / NCTC 12128 / CDC 0568-73</strain>
    </source>
</reference>
<dbReference type="EMBL" id="CU928158">
    <property type="protein sequence ID" value="CAQ87634.1"/>
    <property type="molecule type" value="Genomic_DNA"/>
</dbReference>
<dbReference type="RefSeq" id="WP_000159542.1">
    <property type="nucleotide sequence ID" value="NC_011740.1"/>
</dbReference>
<dbReference type="SMR" id="B7LWN1"/>
<dbReference type="GeneID" id="75058864"/>
<dbReference type="KEGG" id="efe:EFER_0048"/>
<dbReference type="HOGENOM" id="CLU_010118_6_0_6"/>
<dbReference type="OrthoDB" id="9775735at2"/>
<dbReference type="UniPathway" id="UPA00117"/>
<dbReference type="Proteomes" id="UP000000745">
    <property type="component" value="Chromosome"/>
</dbReference>
<dbReference type="GO" id="GO:0005886">
    <property type="term" value="C:plasma membrane"/>
    <property type="evidence" value="ECO:0007669"/>
    <property type="project" value="UniProtKB-SubCell"/>
</dbReference>
<dbReference type="GO" id="GO:0044667">
    <property type="term" value="F:(R)-carnitine:4-(trimethylammonio)butanoate antiporter activity"/>
    <property type="evidence" value="ECO:0007669"/>
    <property type="project" value="UniProtKB-UniRule"/>
</dbReference>
<dbReference type="GO" id="GO:1900751">
    <property type="term" value="P:4-(trimethylammonio)butanoate transport"/>
    <property type="evidence" value="ECO:0007669"/>
    <property type="project" value="InterPro"/>
</dbReference>
<dbReference type="GO" id="GO:0009437">
    <property type="term" value="P:carnitine metabolic process"/>
    <property type="evidence" value="ECO:0007669"/>
    <property type="project" value="UniProtKB-UniRule"/>
</dbReference>
<dbReference type="HAMAP" id="MF_01049">
    <property type="entry name" value="CaiT"/>
    <property type="match status" value="1"/>
</dbReference>
<dbReference type="InterPro" id="IPR018093">
    <property type="entry name" value="BCCT_CS"/>
</dbReference>
<dbReference type="InterPro" id="IPR000060">
    <property type="entry name" value="BCCT_transptr"/>
</dbReference>
<dbReference type="InterPro" id="IPR023449">
    <property type="entry name" value="BCCT_transptr_CaiT"/>
</dbReference>
<dbReference type="NCBIfam" id="TIGR00842">
    <property type="entry name" value="bcct"/>
    <property type="match status" value="1"/>
</dbReference>
<dbReference type="NCBIfam" id="NF002887">
    <property type="entry name" value="PRK03356.1"/>
    <property type="match status" value="1"/>
</dbReference>
<dbReference type="PANTHER" id="PTHR30047">
    <property type="entry name" value="HIGH-AFFINITY CHOLINE TRANSPORT PROTEIN-RELATED"/>
    <property type="match status" value="1"/>
</dbReference>
<dbReference type="PANTHER" id="PTHR30047:SF11">
    <property type="entry name" value="L-CARNITINE_GAMMA-BUTYROBETAINE ANTIPORTER"/>
    <property type="match status" value="1"/>
</dbReference>
<dbReference type="Pfam" id="PF02028">
    <property type="entry name" value="BCCT"/>
    <property type="match status" value="1"/>
</dbReference>
<dbReference type="PROSITE" id="PS01303">
    <property type="entry name" value="BCCT"/>
    <property type="match status" value="1"/>
</dbReference>
<keyword id="KW-0050">Antiport</keyword>
<keyword id="KW-0997">Cell inner membrane</keyword>
<keyword id="KW-1003">Cell membrane</keyword>
<keyword id="KW-0472">Membrane</keyword>
<keyword id="KW-0812">Transmembrane</keyword>
<keyword id="KW-1133">Transmembrane helix</keyword>
<keyword id="KW-0813">Transport</keyword>
<accession>B7LWN1</accession>
<evidence type="ECO:0000255" key="1">
    <source>
        <dbReference type="HAMAP-Rule" id="MF_01049"/>
    </source>
</evidence>
<protein>
    <recommendedName>
        <fullName evidence="1">L-carnitine/gamma-butyrobetaine antiporter</fullName>
    </recommendedName>
</protein>
<proteinExistence type="inferred from homology"/>
<comment type="function">
    <text evidence="1">Catalyzes the exchange of L-carnitine for gamma-butyrobetaine.</text>
</comment>
<comment type="catalytic activity">
    <reaction evidence="1">
        <text>4-(trimethylamino)butanoate(in) + (R)-carnitine(out) = 4-(trimethylamino)butanoate(out) + (R)-carnitine(in)</text>
        <dbReference type="Rhea" id="RHEA:29427"/>
        <dbReference type="ChEBI" id="CHEBI:16244"/>
        <dbReference type="ChEBI" id="CHEBI:16347"/>
    </reaction>
</comment>
<comment type="pathway">
    <text evidence="1">Amine and polyamine metabolism; carnitine metabolism.</text>
</comment>
<comment type="subunit">
    <text evidence="1">Homotrimer.</text>
</comment>
<comment type="subcellular location">
    <subcellularLocation>
        <location evidence="1">Cell inner membrane</location>
        <topology evidence="1">Multi-pass membrane protein</topology>
    </subcellularLocation>
</comment>
<comment type="similarity">
    <text evidence="1">Belongs to the BCCT transporter (TC 2.A.15) family. CaiT subfamily.</text>
</comment>
<name>CAIT_ESCF3</name>